<keyword id="KW-0025">Alternative splicing</keyword>
<keyword id="KW-0539">Nucleus</keyword>
<keyword id="KW-1185">Reference proteome</keyword>
<protein>
    <recommendedName>
        <fullName>LIM domain-binding protein 2</fullName>
        <shortName>LDB-2</shortName>
        <shortName>xLdb2</shortName>
    </recommendedName>
</protein>
<name>LDB2_XENLA</name>
<proteinExistence type="evidence at transcript level"/>
<organism>
    <name type="scientific">Xenopus laevis</name>
    <name type="common">African clawed frog</name>
    <dbReference type="NCBI Taxonomy" id="8355"/>
    <lineage>
        <taxon>Eukaryota</taxon>
        <taxon>Metazoa</taxon>
        <taxon>Chordata</taxon>
        <taxon>Craniata</taxon>
        <taxon>Vertebrata</taxon>
        <taxon>Euteleostomi</taxon>
        <taxon>Amphibia</taxon>
        <taxon>Batrachia</taxon>
        <taxon>Anura</taxon>
        <taxon>Pipoidea</taxon>
        <taxon>Pipidae</taxon>
        <taxon>Xenopodinae</taxon>
        <taxon>Xenopus</taxon>
        <taxon>Xenopus</taxon>
    </lineage>
</organism>
<gene>
    <name evidence="7" type="primary">ldb2</name>
</gene>
<sequence length="398" mass="45908">MSSTPHDPFYSSPFGPFYRRHAPYMVQPEYRIYEMNKRLQTRTEDSDNLWWDAFATEFFEDDATLTLSFCLEDGPKRYTIGRTLIPRYFSTVFEGGVTDLYYILKHSKESYHNSSITVDCDQCTMVTQHGKPMFTKVCTEGRLILEFTFDDLMRIKTWHFTIRQYRELLPRSILAMHAQDPQVLEQLSKNITRMGLTNFTLNYLRLCVILEPMQELMSRHKTYNLSPRDCLKTCLFQKWQRMVAPPAEPTRQTTTKRRKRKNSTNNASNSNAGNNATSAYNRKKVPAASLNLSNQVPFPTTKKCIGDKTRVRRNYRGIRNGLDVMVVGEPTLMGGEFGDEDERLITRLENTQYDAANGMDDEEDFNSSPALGNNSPWNSKPPPNAETKSDNPTQQASQ</sequence>
<dbReference type="EMBL" id="AB250388">
    <property type="protein sequence ID" value="BAE95406.1"/>
    <property type="molecule type" value="mRNA"/>
</dbReference>
<dbReference type="EMBL" id="AB250389">
    <property type="protein sequence ID" value="BAE95407.1"/>
    <property type="molecule type" value="mRNA"/>
</dbReference>
<dbReference type="RefSeq" id="NP_001089184.1">
    <molecule id="Q1EQW7-1"/>
    <property type="nucleotide sequence ID" value="NM_001095715.1"/>
</dbReference>
<dbReference type="SMR" id="Q1EQW7"/>
<dbReference type="KEGG" id="xla:734228"/>
<dbReference type="AGR" id="Xenbase:XB-GENE-17336128"/>
<dbReference type="CTD" id="734228"/>
<dbReference type="Xenbase" id="XB-GENE-17336128">
    <property type="gene designation" value="ldb2.L"/>
</dbReference>
<dbReference type="OrthoDB" id="774557at2759"/>
<dbReference type="Proteomes" id="UP000186698">
    <property type="component" value="Chromosome 1L"/>
</dbReference>
<dbReference type="Bgee" id="734228">
    <property type="expression patterns" value="Expressed in brain and 12 other cell types or tissues"/>
</dbReference>
<dbReference type="GO" id="GO:0005634">
    <property type="term" value="C:nucleus"/>
    <property type="evidence" value="ECO:0000250"/>
    <property type="project" value="UniProtKB"/>
</dbReference>
<dbReference type="GO" id="GO:0005667">
    <property type="term" value="C:transcription regulator complex"/>
    <property type="evidence" value="ECO:0000318"/>
    <property type="project" value="GO_Central"/>
</dbReference>
<dbReference type="GO" id="GO:0030274">
    <property type="term" value="F:LIM domain binding"/>
    <property type="evidence" value="ECO:0000250"/>
    <property type="project" value="UniProtKB"/>
</dbReference>
<dbReference type="GO" id="GO:0003712">
    <property type="term" value="F:transcription coregulator activity"/>
    <property type="evidence" value="ECO:0000318"/>
    <property type="project" value="GO_Central"/>
</dbReference>
<dbReference type="GO" id="GO:0000122">
    <property type="term" value="P:negative regulation of transcription by RNA polymerase II"/>
    <property type="evidence" value="ECO:0000318"/>
    <property type="project" value="GO_Central"/>
</dbReference>
<dbReference type="GO" id="GO:0007399">
    <property type="term" value="P:nervous system development"/>
    <property type="evidence" value="ECO:0000318"/>
    <property type="project" value="GO_Central"/>
</dbReference>
<dbReference type="GO" id="GO:0045944">
    <property type="term" value="P:positive regulation of transcription by RNA polymerase II"/>
    <property type="evidence" value="ECO:0000318"/>
    <property type="project" value="GO_Central"/>
</dbReference>
<dbReference type="Gene3D" id="2.10.110.10">
    <property type="entry name" value="Cysteine Rich Protein"/>
    <property type="match status" value="1"/>
</dbReference>
<dbReference type="InterPro" id="IPR041363">
    <property type="entry name" value="LID"/>
</dbReference>
<dbReference type="InterPro" id="IPR029005">
    <property type="entry name" value="LIM-bd/SEUSS"/>
</dbReference>
<dbReference type="PANTHER" id="PTHR10378">
    <property type="entry name" value="LIM DOMAIN-BINDING PROTEIN"/>
    <property type="match status" value="1"/>
</dbReference>
<dbReference type="Pfam" id="PF17916">
    <property type="entry name" value="LID"/>
    <property type="match status" value="1"/>
</dbReference>
<dbReference type="Pfam" id="PF01803">
    <property type="entry name" value="LIM_bind"/>
    <property type="match status" value="1"/>
</dbReference>
<dbReference type="PROSITE" id="PS51957">
    <property type="entry name" value="LID"/>
    <property type="match status" value="1"/>
</dbReference>
<reference evidence="6 7" key="1">
    <citation type="journal article" date="2006" name="J. Biochem.">
        <title>Spliced isoforms of LIM-domain-binding protein (CLIM/NLI/Ldb) lacking the LIM-interaction domain.</title>
        <authorList>
            <person name="Tran Y.H."/>
            <person name="Xu Z."/>
            <person name="Kato A."/>
            <person name="Mistry A.C."/>
            <person name="Goya Y."/>
            <person name="Taira M."/>
            <person name="Brandt S.J."/>
            <person name="Hirose S."/>
        </authorList>
    </citation>
    <scope>NUCLEOTIDE SEQUENCE [MRNA] (ISOFORMS A AND B)</scope>
    <scope>ALTERNATIVE SPLICING</scope>
    <scope>TISSUE SPECIFICITY</scope>
    <scope>DEVELOPMENTAL STAGE</scope>
    <source>
        <tissue evidence="4">Brain</tissue>
        <tissue evidence="4">Heart</tissue>
    </source>
</reference>
<evidence type="ECO:0000255" key="1"/>
<evidence type="ECO:0000255" key="2">
    <source>
        <dbReference type="PROSITE-ProRule" id="PRU01302"/>
    </source>
</evidence>
<evidence type="ECO:0000256" key="3">
    <source>
        <dbReference type="SAM" id="MobiDB-lite"/>
    </source>
</evidence>
<evidence type="ECO:0000269" key="4">
    <source>
    </source>
</evidence>
<evidence type="ECO:0000303" key="5">
    <source>
    </source>
</evidence>
<evidence type="ECO:0000305" key="6"/>
<evidence type="ECO:0000312" key="7">
    <source>
        <dbReference type="EMBL" id="BAE95406.1"/>
    </source>
</evidence>
<accession>Q1EQW7</accession>
<accession>Q1EQW6</accession>
<feature type="chain" id="PRO_0000284557" description="LIM domain-binding protein 2">
    <location>
        <begin position="1"/>
        <end position="398"/>
    </location>
</feature>
<feature type="domain" description="LIM interaction domain (LID)" evidence="2">
    <location>
        <begin position="323"/>
        <end position="362"/>
    </location>
</feature>
<feature type="region of interest" description="Disordered" evidence="3">
    <location>
        <begin position="245"/>
        <end position="280"/>
    </location>
</feature>
<feature type="region of interest" description="Disordered" evidence="3">
    <location>
        <begin position="354"/>
        <end position="398"/>
    </location>
</feature>
<feature type="compositionally biased region" description="Low complexity" evidence="3">
    <location>
        <begin position="263"/>
        <end position="279"/>
    </location>
</feature>
<feature type="splice variant" id="VSP_052327" description="In isoform a." evidence="5">
    <location>
        <begin position="298"/>
        <end position="322"/>
    </location>
</feature>
<comment type="function">
    <text evidence="6">Binds to the LIM domain of a wide variety of LIM domain-containing transcription factors.</text>
</comment>
<comment type="subcellular location">
    <subcellularLocation>
        <location evidence="6">Nucleus</location>
    </subcellularLocation>
</comment>
<comment type="alternative products">
    <event type="alternative splicing"/>
    <isoform>
        <id>Q1EQW7-1</id>
        <name evidence="4">b</name>
        <sequence type="displayed"/>
    </isoform>
    <isoform>
        <id>Q1EQW7-2</id>
        <name evidence="4">a</name>
        <sequence type="described" ref="VSP_052327"/>
    </isoform>
</comment>
<comment type="tissue specificity">
    <text evidence="4">Expressed in adult brain, lung, spleen and kidney. Isoform b is generally expressed at a higher level than isoform a.</text>
</comment>
<comment type="developmental stage">
    <text evidence="4">Expressed weakly in the stage 10/10.5 embryo. Expression then resumes after stage 25.</text>
</comment>
<comment type="similarity">
    <text evidence="1">Belongs to the LDB family.</text>
</comment>